<sequence length="412" mass="46467">MKIYLVGGAVRDALLGLPVKDRDWVVVGSTPQEMLDAGYQQVGRDFPVFLHPQTHEEYALARTERKSGSGYTGFTCYAAPDVTLEDDLKRRDLTINALAQDDNGEIIDPYNGLGDLQNRLLRHVSPAFGEDPLRVLRVARFAARYAHLGFRIADETLALMREMTHAGELEHLTPERVWKETESALTTRNPQVFFQVLRDCGALRVLFPEIDALFGVPAPAKWHPEIDTGIHTLMTLSMAAMLSPQVDVRFATLCHDLGKGLTPPELWPRHHGHGPAGVKLVEQLCQRLRVPNEIRDLARLVAEFHDLIHTFPMLNPKTIVKLFDSIDAWRKPQRVEQLALTSEADVRGRTGFESADYPQGRWLREAWEVAQSVPTKAVVEAGFKGVEIREELTRRRIAAVASWKEQRCPKPE</sequence>
<keyword id="KW-0067">ATP-binding</keyword>
<keyword id="KW-0378">Hydrolase</keyword>
<keyword id="KW-0460">Magnesium</keyword>
<keyword id="KW-0479">Metal-binding</keyword>
<keyword id="KW-0511">Multifunctional enzyme</keyword>
<keyword id="KW-0533">Nickel</keyword>
<keyword id="KW-0547">Nucleotide-binding</keyword>
<keyword id="KW-0548">Nucleotidyltransferase</keyword>
<keyword id="KW-0692">RNA repair</keyword>
<keyword id="KW-0694">RNA-binding</keyword>
<keyword id="KW-0808">Transferase</keyword>
<keyword id="KW-0819">tRNA processing</keyword>
<reference key="1">
    <citation type="journal article" date="2008" name="J. Bacteriol.">
        <title>The pangenome structure of Escherichia coli: comparative genomic analysis of E. coli commensal and pathogenic isolates.</title>
        <authorList>
            <person name="Rasko D.A."/>
            <person name="Rosovitz M.J."/>
            <person name="Myers G.S.A."/>
            <person name="Mongodin E.F."/>
            <person name="Fricke W.F."/>
            <person name="Gajer P."/>
            <person name="Crabtree J."/>
            <person name="Sebaihia M."/>
            <person name="Thomson N.R."/>
            <person name="Chaudhuri R."/>
            <person name="Henderson I.R."/>
            <person name="Sperandio V."/>
            <person name="Ravel J."/>
        </authorList>
    </citation>
    <scope>NUCLEOTIDE SEQUENCE [LARGE SCALE GENOMIC DNA]</scope>
    <source>
        <strain>HS</strain>
    </source>
</reference>
<comment type="function">
    <text evidence="1">Catalyzes the addition and repair of the essential 3'-terminal CCA sequence in tRNAs without using a nucleic acid template. Adds these three nucleotides in the order of C, C, and A to the tRNA nucleotide-73, using CTP and ATP as substrates and producing inorganic pyrophosphate. tRNA 3'-terminal CCA addition is required both for tRNA processing and repair. Also involved in tRNA surveillance by mediating tandem CCA addition to generate a CCACCA at the 3' terminus of unstable tRNAs. While stable tRNAs receive only 3'-terminal CCA, unstable tRNAs are marked with CCACCA and rapidly degraded.</text>
</comment>
<comment type="catalytic activity">
    <reaction evidence="1">
        <text>a tRNA precursor + 2 CTP + ATP = a tRNA with a 3' CCA end + 3 diphosphate</text>
        <dbReference type="Rhea" id="RHEA:14433"/>
        <dbReference type="Rhea" id="RHEA-COMP:10465"/>
        <dbReference type="Rhea" id="RHEA-COMP:10468"/>
        <dbReference type="ChEBI" id="CHEBI:30616"/>
        <dbReference type="ChEBI" id="CHEBI:33019"/>
        <dbReference type="ChEBI" id="CHEBI:37563"/>
        <dbReference type="ChEBI" id="CHEBI:74896"/>
        <dbReference type="ChEBI" id="CHEBI:83071"/>
        <dbReference type="EC" id="2.7.7.72"/>
    </reaction>
</comment>
<comment type="catalytic activity">
    <reaction evidence="1">
        <text>a tRNA with a 3' CCA end + 2 CTP + ATP = a tRNA with a 3' CCACCA end + 3 diphosphate</text>
        <dbReference type="Rhea" id="RHEA:76235"/>
        <dbReference type="Rhea" id="RHEA-COMP:10468"/>
        <dbReference type="Rhea" id="RHEA-COMP:18655"/>
        <dbReference type="ChEBI" id="CHEBI:30616"/>
        <dbReference type="ChEBI" id="CHEBI:33019"/>
        <dbReference type="ChEBI" id="CHEBI:37563"/>
        <dbReference type="ChEBI" id="CHEBI:83071"/>
        <dbReference type="ChEBI" id="CHEBI:195187"/>
    </reaction>
    <physiologicalReaction direction="left-to-right" evidence="1">
        <dbReference type="Rhea" id="RHEA:76236"/>
    </physiologicalReaction>
</comment>
<comment type="cofactor">
    <cofactor evidence="1">
        <name>Mg(2+)</name>
        <dbReference type="ChEBI" id="CHEBI:18420"/>
    </cofactor>
    <text evidence="1">Magnesium is required for nucleotidyltransferase activity.</text>
</comment>
<comment type="cofactor">
    <cofactor evidence="1">
        <name>Ni(2+)</name>
        <dbReference type="ChEBI" id="CHEBI:49786"/>
    </cofactor>
    <text evidence="1">Nickel for phosphatase activity.</text>
</comment>
<comment type="subunit">
    <text evidence="1">Monomer. Can also form homodimers and oligomers.</text>
</comment>
<comment type="domain">
    <text evidence="1">Comprises two domains: an N-terminal domain containing the nucleotidyltransferase activity and a C-terminal HD domain associated with both phosphodiesterase and phosphatase activities.</text>
</comment>
<comment type="miscellaneous">
    <text evidence="1">A single active site specifically recognizes both ATP and CTP and is responsible for their addition.</text>
</comment>
<comment type="similarity">
    <text evidence="1">Belongs to the tRNA nucleotidyltransferase/poly(A) polymerase family. Bacterial CCA-adding enzyme type 1 subfamily.</text>
</comment>
<evidence type="ECO:0000255" key="1">
    <source>
        <dbReference type="HAMAP-Rule" id="MF_01261"/>
    </source>
</evidence>
<dbReference type="EC" id="2.7.7.72" evidence="1"/>
<dbReference type="EC" id="3.1.3.-" evidence="1"/>
<dbReference type="EC" id="3.1.4.-" evidence="1"/>
<dbReference type="EMBL" id="CP000802">
    <property type="protein sequence ID" value="ABV07464.1"/>
    <property type="molecule type" value="Genomic_DNA"/>
</dbReference>
<dbReference type="RefSeq" id="WP_000708487.1">
    <property type="nucleotide sequence ID" value="NC_009800.1"/>
</dbReference>
<dbReference type="SMR" id="A8A4L0"/>
<dbReference type="KEGG" id="ecx:EcHS_A3233"/>
<dbReference type="HOGENOM" id="CLU_015961_1_1_6"/>
<dbReference type="GO" id="GO:0005524">
    <property type="term" value="F:ATP binding"/>
    <property type="evidence" value="ECO:0007669"/>
    <property type="project" value="UniProtKB-UniRule"/>
</dbReference>
<dbReference type="GO" id="GO:0004810">
    <property type="term" value="F:CCA tRNA nucleotidyltransferase activity"/>
    <property type="evidence" value="ECO:0007669"/>
    <property type="project" value="UniProtKB-UniRule"/>
</dbReference>
<dbReference type="GO" id="GO:0004112">
    <property type="term" value="F:cyclic-nucleotide phosphodiesterase activity"/>
    <property type="evidence" value="ECO:0007669"/>
    <property type="project" value="UniProtKB-UniRule"/>
</dbReference>
<dbReference type="GO" id="GO:0000287">
    <property type="term" value="F:magnesium ion binding"/>
    <property type="evidence" value="ECO:0007669"/>
    <property type="project" value="UniProtKB-UniRule"/>
</dbReference>
<dbReference type="GO" id="GO:0016791">
    <property type="term" value="F:phosphatase activity"/>
    <property type="evidence" value="ECO:0007669"/>
    <property type="project" value="UniProtKB-UniRule"/>
</dbReference>
<dbReference type="GO" id="GO:0000049">
    <property type="term" value="F:tRNA binding"/>
    <property type="evidence" value="ECO:0007669"/>
    <property type="project" value="UniProtKB-UniRule"/>
</dbReference>
<dbReference type="GO" id="GO:0042245">
    <property type="term" value="P:RNA repair"/>
    <property type="evidence" value="ECO:0007669"/>
    <property type="project" value="UniProtKB-KW"/>
</dbReference>
<dbReference type="GO" id="GO:0001680">
    <property type="term" value="P:tRNA 3'-terminal CCA addition"/>
    <property type="evidence" value="ECO:0007669"/>
    <property type="project" value="UniProtKB-UniRule"/>
</dbReference>
<dbReference type="CDD" id="cd00077">
    <property type="entry name" value="HDc"/>
    <property type="match status" value="1"/>
</dbReference>
<dbReference type="CDD" id="cd05398">
    <property type="entry name" value="NT_ClassII-CCAase"/>
    <property type="match status" value="1"/>
</dbReference>
<dbReference type="FunFam" id="1.10.3090.10:FF:000001">
    <property type="entry name" value="Multifunctional CCA protein"/>
    <property type="match status" value="1"/>
</dbReference>
<dbReference type="FunFam" id="3.30.460.10:FF:000016">
    <property type="entry name" value="Multifunctional CCA protein"/>
    <property type="match status" value="1"/>
</dbReference>
<dbReference type="Gene3D" id="3.30.460.10">
    <property type="entry name" value="Beta Polymerase, domain 2"/>
    <property type="match status" value="1"/>
</dbReference>
<dbReference type="Gene3D" id="1.10.3090.10">
    <property type="entry name" value="cca-adding enzyme, domain 2"/>
    <property type="match status" value="1"/>
</dbReference>
<dbReference type="HAMAP" id="MF_01261">
    <property type="entry name" value="CCA_bact_type1"/>
    <property type="match status" value="1"/>
</dbReference>
<dbReference type="HAMAP" id="MF_01262">
    <property type="entry name" value="CCA_bact_type2"/>
    <property type="match status" value="1"/>
</dbReference>
<dbReference type="InterPro" id="IPR012006">
    <property type="entry name" value="CCA_bact"/>
</dbReference>
<dbReference type="InterPro" id="IPR003607">
    <property type="entry name" value="HD/PDEase_dom"/>
</dbReference>
<dbReference type="InterPro" id="IPR006674">
    <property type="entry name" value="HD_domain"/>
</dbReference>
<dbReference type="InterPro" id="IPR043519">
    <property type="entry name" value="NT_sf"/>
</dbReference>
<dbReference type="InterPro" id="IPR002646">
    <property type="entry name" value="PolA_pol_head_dom"/>
</dbReference>
<dbReference type="InterPro" id="IPR032828">
    <property type="entry name" value="PolyA_RNA-bd"/>
</dbReference>
<dbReference type="InterPro" id="IPR050124">
    <property type="entry name" value="tRNA_CCA-adding_enzyme"/>
</dbReference>
<dbReference type="NCBIfam" id="NF008137">
    <property type="entry name" value="PRK10885.1"/>
    <property type="match status" value="1"/>
</dbReference>
<dbReference type="PANTHER" id="PTHR47545">
    <property type="entry name" value="MULTIFUNCTIONAL CCA PROTEIN"/>
    <property type="match status" value="1"/>
</dbReference>
<dbReference type="PANTHER" id="PTHR47545:SF1">
    <property type="entry name" value="MULTIFUNCTIONAL CCA PROTEIN"/>
    <property type="match status" value="1"/>
</dbReference>
<dbReference type="Pfam" id="PF01966">
    <property type="entry name" value="HD"/>
    <property type="match status" value="1"/>
</dbReference>
<dbReference type="Pfam" id="PF01743">
    <property type="entry name" value="PolyA_pol"/>
    <property type="match status" value="1"/>
</dbReference>
<dbReference type="Pfam" id="PF12627">
    <property type="entry name" value="PolyA_pol_RNAbd"/>
    <property type="match status" value="1"/>
</dbReference>
<dbReference type="PIRSF" id="PIRSF000813">
    <property type="entry name" value="CCA_bact"/>
    <property type="match status" value="1"/>
</dbReference>
<dbReference type="SUPFAM" id="SSF81301">
    <property type="entry name" value="Nucleotidyltransferase"/>
    <property type="match status" value="1"/>
</dbReference>
<dbReference type="SUPFAM" id="SSF81891">
    <property type="entry name" value="Poly A polymerase C-terminal region-like"/>
    <property type="match status" value="1"/>
</dbReference>
<dbReference type="PROSITE" id="PS51831">
    <property type="entry name" value="HD"/>
    <property type="match status" value="1"/>
</dbReference>
<protein>
    <recommendedName>
        <fullName evidence="1">Multifunctional CCA protein</fullName>
    </recommendedName>
    <domain>
        <recommendedName>
            <fullName evidence="1">CCA-adding enzyme</fullName>
            <ecNumber evidence="1">2.7.7.72</ecNumber>
        </recommendedName>
        <alternativeName>
            <fullName evidence="1">CCA tRNA nucleotidyltransferase</fullName>
        </alternativeName>
        <alternativeName>
            <fullName evidence="1">tRNA CCA-pyrophosphorylase</fullName>
        </alternativeName>
        <alternativeName>
            <fullName evidence="1">tRNA adenylyl-/cytidylyl-transferase</fullName>
        </alternativeName>
        <alternativeName>
            <fullName evidence="1">tRNA nucleotidyltransferase</fullName>
        </alternativeName>
        <alternativeName>
            <fullName evidence="1">tRNA-NT</fullName>
        </alternativeName>
    </domain>
    <domain>
        <recommendedName>
            <fullName evidence="1">2'-nucleotidase</fullName>
            <ecNumber evidence="1">3.1.3.-</ecNumber>
        </recommendedName>
    </domain>
    <domain>
        <recommendedName>
            <fullName evidence="1">2',3'-cyclic phosphodiesterase</fullName>
            <ecNumber evidence="1">3.1.4.-</ecNumber>
        </recommendedName>
    </domain>
    <domain>
        <recommendedName>
            <fullName evidence="1">Phosphatase</fullName>
            <ecNumber evidence="1">3.1.3.-</ecNumber>
        </recommendedName>
    </domain>
</protein>
<gene>
    <name evidence="1" type="primary">cca</name>
    <name type="ordered locus">EcHS_A3233</name>
</gene>
<proteinExistence type="inferred from homology"/>
<name>CCA_ECOHS</name>
<accession>A8A4L0</accession>
<organism>
    <name type="scientific">Escherichia coli O9:H4 (strain HS)</name>
    <dbReference type="NCBI Taxonomy" id="331112"/>
    <lineage>
        <taxon>Bacteria</taxon>
        <taxon>Pseudomonadati</taxon>
        <taxon>Pseudomonadota</taxon>
        <taxon>Gammaproteobacteria</taxon>
        <taxon>Enterobacterales</taxon>
        <taxon>Enterobacteriaceae</taxon>
        <taxon>Escherichia</taxon>
    </lineage>
</organism>
<feature type="chain" id="PRO_1000067286" description="Multifunctional CCA protein">
    <location>
        <begin position="1"/>
        <end position="412"/>
    </location>
</feature>
<feature type="domain" description="HD" evidence="1">
    <location>
        <begin position="228"/>
        <end position="329"/>
    </location>
</feature>
<feature type="binding site" evidence="1">
    <location>
        <position position="8"/>
    </location>
    <ligand>
        <name>ATP</name>
        <dbReference type="ChEBI" id="CHEBI:30616"/>
    </ligand>
</feature>
<feature type="binding site" evidence="1">
    <location>
        <position position="8"/>
    </location>
    <ligand>
        <name>CTP</name>
        <dbReference type="ChEBI" id="CHEBI:37563"/>
    </ligand>
</feature>
<feature type="binding site" evidence="1">
    <location>
        <position position="11"/>
    </location>
    <ligand>
        <name>ATP</name>
        <dbReference type="ChEBI" id="CHEBI:30616"/>
    </ligand>
</feature>
<feature type="binding site" evidence="1">
    <location>
        <position position="11"/>
    </location>
    <ligand>
        <name>CTP</name>
        <dbReference type="ChEBI" id="CHEBI:37563"/>
    </ligand>
</feature>
<feature type="binding site" evidence="1">
    <location>
        <position position="21"/>
    </location>
    <ligand>
        <name>Mg(2+)</name>
        <dbReference type="ChEBI" id="CHEBI:18420"/>
    </ligand>
</feature>
<feature type="binding site" evidence="1">
    <location>
        <position position="23"/>
    </location>
    <ligand>
        <name>Mg(2+)</name>
        <dbReference type="ChEBI" id="CHEBI:18420"/>
    </ligand>
</feature>
<feature type="binding site" evidence="1">
    <location>
        <position position="91"/>
    </location>
    <ligand>
        <name>ATP</name>
        <dbReference type="ChEBI" id="CHEBI:30616"/>
    </ligand>
</feature>
<feature type="binding site" evidence="1">
    <location>
        <position position="91"/>
    </location>
    <ligand>
        <name>CTP</name>
        <dbReference type="ChEBI" id="CHEBI:37563"/>
    </ligand>
</feature>
<feature type="binding site" evidence="1">
    <location>
        <position position="137"/>
    </location>
    <ligand>
        <name>ATP</name>
        <dbReference type="ChEBI" id="CHEBI:30616"/>
    </ligand>
</feature>
<feature type="binding site" evidence="1">
    <location>
        <position position="137"/>
    </location>
    <ligand>
        <name>CTP</name>
        <dbReference type="ChEBI" id="CHEBI:37563"/>
    </ligand>
</feature>
<feature type="binding site" evidence="1">
    <location>
        <position position="140"/>
    </location>
    <ligand>
        <name>ATP</name>
        <dbReference type="ChEBI" id="CHEBI:30616"/>
    </ligand>
</feature>
<feature type="binding site" evidence="1">
    <location>
        <position position="140"/>
    </location>
    <ligand>
        <name>CTP</name>
        <dbReference type="ChEBI" id="CHEBI:37563"/>
    </ligand>
</feature>